<proteinExistence type="evidence at transcript level"/>
<dbReference type="EC" id="7.1.1.2"/>
<dbReference type="EMBL" id="DQ440274">
    <property type="protein sequence ID" value="ABF18307.1"/>
    <property type="molecule type" value="mRNA"/>
</dbReference>
<dbReference type="EMBL" id="EU352212">
    <property type="protein sequence ID" value="ABY51631.1"/>
    <property type="molecule type" value="Genomic_DNA"/>
</dbReference>
<dbReference type="RefSeq" id="YP_001649170.1">
    <property type="nucleotide sequence ID" value="NC_010241.1"/>
</dbReference>
<dbReference type="SMR" id="Q1HR20"/>
<dbReference type="FunCoup" id="Q1HR20">
    <property type="interactions" value="129"/>
</dbReference>
<dbReference type="STRING" id="7159.Q1HR20"/>
<dbReference type="PaxDb" id="7159-AAEL018680-PA"/>
<dbReference type="EnsemblMetazoa" id="AAEL018680-RA">
    <property type="protein sequence ID" value="AAEL018680-PA"/>
    <property type="gene ID" value="AAEL018680"/>
</dbReference>
<dbReference type="VEuPathDB" id="VectorBase:AAEL018680"/>
<dbReference type="eggNOG" id="KOG4845">
    <property type="taxonomic scope" value="Eukaryota"/>
</dbReference>
<dbReference type="HOGENOM" id="CLU_007100_4_0_1"/>
<dbReference type="InParanoid" id="Q1HR20"/>
<dbReference type="OrthoDB" id="564260at2759"/>
<dbReference type="Proteomes" id="UP000008820">
    <property type="component" value="Mitochondrion MT"/>
</dbReference>
<dbReference type="Proteomes" id="UP000682892">
    <property type="component" value="Mitochondrion MT"/>
</dbReference>
<dbReference type="GO" id="GO:0031966">
    <property type="term" value="C:mitochondrial membrane"/>
    <property type="evidence" value="ECO:0007669"/>
    <property type="project" value="UniProtKB-SubCell"/>
</dbReference>
<dbReference type="GO" id="GO:0008137">
    <property type="term" value="F:NADH dehydrogenase (ubiquinone) activity"/>
    <property type="evidence" value="ECO:0007669"/>
    <property type="project" value="UniProtKB-EC"/>
</dbReference>
<dbReference type="GO" id="GO:0048039">
    <property type="term" value="F:ubiquinone binding"/>
    <property type="evidence" value="ECO:0007669"/>
    <property type="project" value="TreeGrafter"/>
</dbReference>
<dbReference type="GO" id="GO:0042773">
    <property type="term" value="P:ATP synthesis coupled electron transport"/>
    <property type="evidence" value="ECO:0007669"/>
    <property type="project" value="InterPro"/>
</dbReference>
<dbReference type="GO" id="GO:0015990">
    <property type="term" value="P:electron transport coupled proton transport"/>
    <property type="evidence" value="ECO:0007669"/>
    <property type="project" value="TreeGrafter"/>
</dbReference>
<dbReference type="InterPro" id="IPR000260">
    <property type="entry name" value="NADH4_N"/>
</dbReference>
<dbReference type="InterPro" id="IPR003918">
    <property type="entry name" value="NADH_UbQ_OxRdtase"/>
</dbReference>
<dbReference type="InterPro" id="IPR001750">
    <property type="entry name" value="ND/Mrp_TM"/>
</dbReference>
<dbReference type="PANTHER" id="PTHR43507">
    <property type="entry name" value="NADH-UBIQUINONE OXIDOREDUCTASE CHAIN 4"/>
    <property type="match status" value="1"/>
</dbReference>
<dbReference type="PANTHER" id="PTHR43507:SF20">
    <property type="entry name" value="NADH-UBIQUINONE OXIDOREDUCTASE CHAIN 4"/>
    <property type="match status" value="1"/>
</dbReference>
<dbReference type="Pfam" id="PF01059">
    <property type="entry name" value="Oxidored_q5_N"/>
    <property type="match status" value="1"/>
</dbReference>
<dbReference type="Pfam" id="PF00361">
    <property type="entry name" value="Proton_antipo_M"/>
    <property type="match status" value="1"/>
</dbReference>
<dbReference type="PRINTS" id="PR01437">
    <property type="entry name" value="NUOXDRDTASE4"/>
</dbReference>
<geneLocation type="mitochondrion" evidence="5"/>
<feature type="chain" id="PRO_0000347268" description="NADH-ubiquinone oxidoreductase chain 4">
    <location>
        <begin position="1"/>
        <end position="447"/>
    </location>
</feature>
<feature type="transmembrane region" description="Helical" evidence="4">
    <location>
        <begin position="28"/>
        <end position="48"/>
    </location>
</feature>
<feature type="transmembrane region" description="Helical" evidence="4">
    <location>
        <begin position="56"/>
        <end position="76"/>
    </location>
</feature>
<feature type="transmembrane region" description="Helical" evidence="4">
    <location>
        <begin position="85"/>
        <end position="105"/>
    </location>
</feature>
<feature type="transmembrane region" description="Helical" evidence="4">
    <location>
        <begin position="110"/>
        <end position="130"/>
    </location>
</feature>
<feature type="transmembrane region" description="Helical" evidence="4">
    <location>
        <begin position="141"/>
        <end position="161"/>
    </location>
</feature>
<feature type="transmembrane region" description="Helical" evidence="4">
    <location>
        <begin position="183"/>
        <end position="203"/>
    </location>
</feature>
<feature type="transmembrane region" description="Helical" evidence="4">
    <location>
        <begin position="213"/>
        <end position="233"/>
    </location>
</feature>
<feature type="transmembrane region" description="Helical" evidence="4">
    <location>
        <begin position="246"/>
        <end position="266"/>
    </location>
</feature>
<feature type="transmembrane region" description="Helical" evidence="4">
    <location>
        <begin position="273"/>
        <end position="293"/>
    </location>
</feature>
<feature type="transmembrane region" description="Helical" evidence="4">
    <location>
        <begin position="301"/>
        <end position="321"/>
    </location>
</feature>
<feature type="transmembrane region" description="Helical" evidence="4">
    <location>
        <begin position="343"/>
        <end position="365"/>
    </location>
</feature>
<feature type="transmembrane region" description="Helical" evidence="4">
    <location>
        <begin position="380"/>
        <end position="400"/>
    </location>
</feature>
<feature type="transmembrane region" description="Helical" evidence="4">
    <location>
        <begin position="409"/>
        <end position="431"/>
    </location>
</feature>
<gene>
    <name evidence="3" type="primary">mt:ND4</name>
    <name evidence="6" type="synonym">ND4</name>
</gene>
<organism>
    <name type="scientific">Aedes aegypti</name>
    <name type="common">Yellowfever mosquito</name>
    <name type="synonym">Culex aegypti</name>
    <dbReference type="NCBI Taxonomy" id="7159"/>
    <lineage>
        <taxon>Eukaryota</taxon>
        <taxon>Metazoa</taxon>
        <taxon>Ecdysozoa</taxon>
        <taxon>Arthropoda</taxon>
        <taxon>Hexapoda</taxon>
        <taxon>Insecta</taxon>
        <taxon>Pterygota</taxon>
        <taxon>Neoptera</taxon>
        <taxon>Endopterygota</taxon>
        <taxon>Diptera</taxon>
        <taxon>Nematocera</taxon>
        <taxon>Culicoidea</taxon>
        <taxon>Culicidae</taxon>
        <taxon>Culicinae</taxon>
        <taxon>Aedini</taxon>
        <taxon>Aedes</taxon>
        <taxon>Stegomyia</taxon>
    </lineage>
</organism>
<name>NU4M_AEDAE</name>
<evidence type="ECO:0000250" key="1"/>
<evidence type="ECO:0000250" key="2">
    <source>
        <dbReference type="UniProtKB" id="P03910"/>
    </source>
</evidence>
<evidence type="ECO:0000250" key="3">
    <source>
        <dbReference type="UniProtKB" id="P18931"/>
    </source>
</evidence>
<evidence type="ECO:0000255" key="4"/>
<evidence type="ECO:0000312" key="5">
    <source>
        <dbReference type="EMBL" id="ABF18307.1"/>
    </source>
</evidence>
<evidence type="ECO:0000312" key="6">
    <source>
        <dbReference type="EMBL" id="ABY51631.1"/>
    </source>
</evidence>
<sequence length="447" mass="51632">MLKFIFMIMFIFFLFFKKNIYWMVQNLIFLATCLFMIKISSNYYFCDISYYFGMDMISYGLILLSFWICGLMLMASEGVVRYNNYVNLFLFMIVFLLLMLIFTFSSMSMFMFYLFFESSLIPTLFLILGWGYQPERLQAGIYLLFYTLLASLPLLIGIFYIKNDNYTMNFIMLSYKNLYNLDFLYLCMIFAFLVKMPMFLVHLWLPKAHVEAPVSGSMILAGVLLKLGGYGLLRVFSLMQVLGMKFNYIWISISLIGGVLVSLICLWQMDLKALIAYSSVAHMGIVLSGLMTMTYWGLNGSYTLMIAHGLCSSGLFCLANISYERMGSRSLLINKGMLNFMPSLSLWWFLLCSGNMAAPPTLNLLGEISLLNSIVSWSWLTMISLAFLSFFSAAYTLYLFAYSQHGKIYSGVYFFSSGTTREFLVLMLHWLPLNLLIMKSNFCMLWI</sequence>
<protein>
    <recommendedName>
        <fullName evidence="2">NADH-ubiquinone oxidoreductase chain 4</fullName>
        <ecNumber>7.1.1.2</ecNumber>
    </recommendedName>
    <alternativeName>
        <fullName evidence="2">NADH dehydrogenase subunit 4</fullName>
    </alternativeName>
</protein>
<accession>Q1HR20</accession>
<comment type="function">
    <text evidence="2">Core subunit of the mitochondrial membrane respiratory chain NADH dehydrogenase (Complex I) that is believed to belong to the minimal assembly required for catalysis. Complex I functions in the transfer of electrons from NADH to the respiratory chain. The immediate electron acceptor for the enzyme is believed to be ubiquinone (By similarity).</text>
</comment>
<comment type="catalytic activity">
    <reaction>
        <text>a ubiquinone + NADH + 5 H(+)(in) = a ubiquinol + NAD(+) + 4 H(+)(out)</text>
        <dbReference type="Rhea" id="RHEA:29091"/>
        <dbReference type="Rhea" id="RHEA-COMP:9565"/>
        <dbReference type="Rhea" id="RHEA-COMP:9566"/>
        <dbReference type="ChEBI" id="CHEBI:15378"/>
        <dbReference type="ChEBI" id="CHEBI:16389"/>
        <dbReference type="ChEBI" id="CHEBI:17976"/>
        <dbReference type="ChEBI" id="CHEBI:57540"/>
        <dbReference type="ChEBI" id="CHEBI:57945"/>
        <dbReference type="EC" id="7.1.1.2"/>
    </reaction>
</comment>
<comment type="subcellular location">
    <subcellularLocation>
        <location evidence="1">Mitochondrion membrane</location>
        <topology evidence="1">Multi-pass membrane protein</topology>
    </subcellularLocation>
</comment>
<comment type="similarity">
    <text evidence="4">Belongs to the complex I subunit 4 family.</text>
</comment>
<reference evidence="5" key="1">
    <citation type="journal article" date="2007" name="BMC Genomics">
        <title>An annotated catalogue of salivary gland transcripts in the adult female mosquito, Aedes aegypti.</title>
        <authorList>
            <person name="Ribeiro J.M.C."/>
            <person name="Arca B."/>
            <person name="Lombardo F."/>
            <person name="Calvo E."/>
            <person name="Phan V.M."/>
            <person name="Chandra P.K."/>
            <person name="Wikel S.K."/>
        </authorList>
    </citation>
    <scope>NUCLEOTIDE SEQUENCE [LARGE SCALE MRNA]</scope>
    <source>
        <strain>Black-eyed Liverpool</strain>
        <tissue>Salivary gland</tissue>
    </source>
</reference>
<reference evidence="6" key="2">
    <citation type="submission" date="2007-12" db="EMBL/GenBank/DDBJ databases">
        <title>The mitochondrial genome of the Yellow fever mosquito - Aedes aegypti.</title>
        <authorList>
            <person name="Lobo N.F."/>
            <person name="Lovin D."/>
            <person name="DeBruyn B."/>
            <person name="Puiu D."/>
            <person name="Shumway M."/>
            <person name="Haas B."/>
            <person name="Nene V."/>
            <person name="Severson D.W."/>
        </authorList>
    </citation>
    <scope>NUCLEOTIDE SEQUENCE [LARGE SCALE GENOMIC DNA]</scope>
    <source>
        <strain evidence="6">LVPib12</strain>
    </source>
</reference>
<keyword id="KW-0249">Electron transport</keyword>
<keyword id="KW-0472">Membrane</keyword>
<keyword id="KW-0496">Mitochondrion</keyword>
<keyword id="KW-0520">NAD</keyword>
<keyword id="KW-1185">Reference proteome</keyword>
<keyword id="KW-0679">Respiratory chain</keyword>
<keyword id="KW-1278">Translocase</keyword>
<keyword id="KW-0812">Transmembrane</keyword>
<keyword id="KW-1133">Transmembrane helix</keyword>
<keyword id="KW-0813">Transport</keyword>
<keyword id="KW-0830">Ubiquinone</keyword>